<comment type="similarity">
    <text evidence="1">Belongs to the UPF0181 family.</text>
</comment>
<protein>
    <recommendedName>
        <fullName evidence="1">UPF0181 protein CKO_01169</fullName>
    </recommendedName>
</protein>
<feature type="chain" id="PRO_1000014969" description="UPF0181 protein CKO_01169">
    <location>
        <begin position="1"/>
        <end position="59"/>
    </location>
</feature>
<reference key="1">
    <citation type="submission" date="2007-08" db="EMBL/GenBank/DDBJ databases">
        <authorList>
            <consortium name="The Citrobacter koseri Genome Sequencing Project"/>
            <person name="McClelland M."/>
            <person name="Sanderson E.K."/>
            <person name="Porwollik S."/>
            <person name="Spieth J."/>
            <person name="Clifton W.S."/>
            <person name="Latreille P."/>
            <person name="Courtney L."/>
            <person name="Wang C."/>
            <person name="Pepin K."/>
            <person name="Bhonagiri V."/>
            <person name="Nash W."/>
            <person name="Johnson M."/>
            <person name="Thiruvilangam P."/>
            <person name="Wilson R."/>
        </authorList>
    </citation>
    <scope>NUCLEOTIDE SEQUENCE [LARGE SCALE GENOMIC DNA]</scope>
    <source>
        <strain>ATCC BAA-895 / CDC 4225-83 / SGSC4696</strain>
    </source>
</reference>
<dbReference type="EMBL" id="CP000822">
    <property type="protein sequence ID" value="ABV12310.1"/>
    <property type="molecule type" value="Genomic_DNA"/>
</dbReference>
<dbReference type="RefSeq" id="WP_012132063.1">
    <property type="nucleotide sequence ID" value="NC_009792.1"/>
</dbReference>
<dbReference type="SMR" id="A8AFP7"/>
<dbReference type="STRING" id="290338.CKO_01169"/>
<dbReference type="GeneID" id="45135302"/>
<dbReference type="KEGG" id="cko:CKO_01169"/>
<dbReference type="HOGENOM" id="CLU_185263_0_0_6"/>
<dbReference type="OrthoDB" id="6522084at2"/>
<dbReference type="Proteomes" id="UP000008148">
    <property type="component" value="Chromosome"/>
</dbReference>
<dbReference type="HAMAP" id="MF_00507">
    <property type="entry name" value="UPF0181"/>
    <property type="match status" value="1"/>
</dbReference>
<dbReference type="InterPro" id="IPR005371">
    <property type="entry name" value="UPF0181"/>
</dbReference>
<dbReference type="NCBIfam" id="NF003476">
    <property type="entry name" value="PRK05114.1"/>
    <property type="match status" value="1"/>
</dbReference>
<dbReference type="Pfam" id="PF03701">
    <property type="entry name" value="UPF0181"/>
    <property type="match status" value="1"/>
</dbReference>
<proteinExistence type="inferred from homology"/>
<gene>
    <name type="ordered locus">CKO_01169</name>
</gene>
<sequence length="59" mass="6558">MFAGLPSLSHEQQQKAVERIQELMSQGMSSGQAIAQVADELRATHTGERIVARFEDEDE</sequence>
<name>Y1169_CITK8</name>
<keyword id="KW-1185">Reference proteome</keyword>
<evidence type="ECO:0000255" key="1">
    <source>
        <dbReference type="HAMAP-Rule" id="MF_00507"/>
    </source>
</evidence>
<organism>
    <name type="scientific">Citrobacter koseri (strain ATCC BAA-895 / CDC 4225-83 / SGSC4696)</name>
    <dbReference type="NCBI Taxonomy" id="290338"/>
    <lineage>
        <taxon>Bacteria</taxon>
        <taxon>Pseudomonadati</taxon>
        <taxon>Pseudomonadota</taxon>
        <taxon>Gammaproteobacteria</taxon>
        <taxon>Enterobacterales</taxon>
        <taxon>Enterobacteriaceae</taxon>
        <taxon>Citrobacter</taxon>
    </lineage>
</organism>
<accession>A8AFP7</accession>